<accession>Q3UHR0</accession>
<accession>A2AS78</accession>
<accession>Q0KK52</accession>
<accession>Q0KK57</accession>
<accession>Q3TPP4</accession>
<accession>Q3UHG9</accession>
<accession>Q6GQV4</accession>
<accession>Q6P9S8</accession>
<accession>Q6PFC9</accession>
<accession>Q80UX2</accession>
<evidence type="ECO:0000250" key="1">
    <source>
        <dbReference type="UniProtKB" id="Q9P281"/>
    </source>
</evidence>
<evidence type="ECO:0000255" key="2"/>
<evidence type="ECO:0000255" key="3">
    <source>
        <dbReference type="PROSITE-ProRule" id="PRU00370"/>
    </source>
</evidence>
<evidence type="ECO:0000256" key="4">
    <source>
        <dbReference type="SAM" id="MobiDB-lite"/>
    </source>
</evidence>
<evidence type="ECO:0000305" key="5"/>
<evidence type="ECO:0007829" key="6">
    <source>
        <dbReference type="PDB" id="6VIL"/>
    </source>
</evidence>
<feature type="chain" id="PRO_0000312119" description="BAH and coiled-coil domain-containing protein 1">
    <location>
        <begin position="1"/>
        <end position="2643"/>
    </location>
</feature>
<feature type="domain" description="BAH" evidence="3">
    <location>
        <begin position="2517"/>
        <end position="2637"/>
    </location>
</feature>
<feature type="region of interest" description="Disordered" evidence="4">
    <location>
        <begin position="23"/>
        <end position="45"/>
    </location>
</feature>
<feature type="region of interest" description="Disordered" evidence="4">
    <location>
        <begin position="84"/>
        <end position="106"/>
    </location>
</feature>
<feature type="region of interest" description="Disordered" evidence="4">
    <location>
        <begin position="224"/>
        <end position="273"/>
    </location>
</feature>
<feature type="region of interest" description="Disordered" evidence="4">
    <location>
        <begin position="674"/>
        <end position="704"/>
    </location>
</feature>
<feature type="region of interest" description="Disordered" evidence="4">
    <location>
        <begin position="721"/>
        <end position="758"/>
    </location>
</feature>
<feature type="region of interest" description="Disordered" evidence="4">
    <location>
        <begin position="985"/>
        <end position="1023"/>
    </location>
</feature>
<feature type="region of interest" description="Disordered" evidence="4">
    <location>
        <begin position="1038"/>
        <end position="1299"/>
    </location>
</feature>
<feature type="region of interest" description="Disordered" evidence="4">
    <location>
        <begin position="1466"/>
        <end position="1520"/>
    </location>
</feature>
<feature type="region of interest" description="Disordered" evidence="4">
    <location>
        <begin position="1537"/>
        <end position="1559"/>
    </location>
</feature>
<feature type="region of interest" description="Disordered" evidence="4">
    <location>
        <begin position="1604"/>
        <end position="1641"/>
    </location>
</feature>
<feature type="region of interest" description="Disordered" evidence="4">
    <location>
        <begin position="1746"/>
        <end position="1781"/>
    </location>
</feature>
<feature type="region of interest" description="Disordered" evidence="4">
    <location>
        <begin position="1875"/>
        <end position="1896"/>
    </location>
</feature>
<feature type="region of interest" description="Disordered" evidence="4">
    <location>
        <begin position="2055"/>
        <end position="2124"/>
    </location>
</feature>
<feature type="region of interest" description="Disordered" evidence="4">
    <location>
        <begin position="2322"/>
        <end position="2341"/>
    </location>
</feature>
<feature type="region of interest" description="Disordered" evidence="4">
    <location>
        <begin position="2349"/>
        <end position="2386"/>
    </location>
</feature>
<feature type="coiled-coil region" evidence="2">
    <location>
        <begin position="1346"/>
        <end position="1373"/>
    </location>
</feature>
<feature type="coiled-coil region" evidence="2">
    <location>
        <begin position="1437"/>
        <end position="1486"/>
    </location>
</feature>
<feature type="compositionally biased region" description="Basic and acidic residues" evidence="4">
    <location>
        <begin position="224"/>
        <end position="249"/>
    </location>
</feature>
<feature type="compositionally biased region" description="Basic and acidic residues" evidence="4">
    <location>
        <begin position="683"/>
        <end position="702"/>
    </location>
</feature>
<feature type="compositionally biased region" description="Basic and acidic residues" evidence="4">
    <location>
        <begin position="985"/>
        <end position="1003"/>
    </location>
</feature>
<feature type="compositionally biased region" description="Pro residues" evidence="4">
    <location>
        <begin position="1133"/>
        <end position="1149"/>
    </location>
</feature>
<feature type="compositionally biased region" description="Polar residues" evidence="4">
    <location>
        <begin position="1210"/>
        <end position="1224"/>
    </location>
</feature>
<feature type="compositionally biased region" description="Acidic residues" evidence="4">
    <location>
        <begin position="1269"/>
        <end position="1284"/>
    </location>
</feature>
<feature type="compositionally biased region" description="Basic and acidic residues" evidence="4">
    <location>
        <begin position="1466"/>
        <end position="1484"/>
    </location>
</feature>
<feature type="compositionally biased region" description="Basic residues" evidence="4">
    <location>
        <begin position="1487"/>
        <end position="1501"/>
    </location>
</feature>
<feature type="compositionally biased region" description="Basic and acidic residues" evidence="4">
    <location>
        <begin position="1631"/>
        <end position="1641"/>
    </location>
</feature>
<feature type="compositionally biased region" description="Basic residues" evidence="4">
    <location>
        <begin position="1757"/>
        <end position="1767"/>
    </location>
</feature>
<feature type="compositionally biased region" description="Acidic residues" evidence="4">
    <location>
        <begin position="1875"/>
        <end position="1892"/>
    </location>
</feature>
<feature type="compositionally biased region" description="Low complexity" evidence="4">
    <location>
        <begin position="2349"/>
        <end position="2374"/>
    </location>
</feature>
<feature type="compositionally biased region" description="Acidic residues" evidence="4">
    <location>
        <begin position="2375"/>
        <end position="2386"/>
    </location>
</feature>
<feature type="modified residue" description="N6-acetyllysine" evidence="1">
    <location>
        <position position="220"/>
    </location>
</feature>
<feature type="sequence conflict" description="In Ref. 2; BAE27797." evidence="5" ref="2">
    <original>A</original>
    <variation>P</variation>
    <location>
        <position position="122"/>
    </location>
</feature>
<feature type="sequence conflict" description="In Ref. 1; BAF03198." evidence="5" ref="1">
    <original>A</original>
    <variation>T</variation>
    <location>
        <position position="295"/>
    </location>
</feature>
<feature type="sequence conflict" description="In Ref. 1; BAF03203." evidence="5" ref="1">
    <original>S</original>
    <variation>N</variation>
    <location>
        <position position="363"/>
    </location>
</feature>
<feature type="sequence conflict" description="In Ref. 1; BAF03198." evidence="5" ref="1">
    <original>A</original>
    <variation>V</variation>
    <location>
        <position position="752"/>
    </location>
</feature>
<feature type="sequence conflict" description="In Ref. 1; BAF03198." evidence="5" ref="1">
    <original>P</original>
    <variation>R</variation>
    <location>
        <position position="921"/>
    </location>
</feature>
<feature type="sequence conflict" description="In Ref. 1; BAF03198." evidence="5" ref="1">
    <original>L</original>
    <variation>LQ</variation>
    <location>
        <position position="937"/>
    </location>
</feature>
<feature type="sequence conflict" description="In Ref. 2; BAE27888." evidence="5" ref="2">
    <original>Q</original>
    <variation>QA</variation>
    <location>
        <position position="1366"/>
    </location>
</feature>
<feature type="sequence conflict" description="In Ref. 1; BAF03198." evidence="5" ref="1">
    <original>I</original>
    <variation>T</variation>
    <location>
        <position position="1826"/>
    </location>
</feature>
<feature type="sequence conflict" description="In Ref. 2; BAE37691." evidence="5" ref="2">
    <original>A</original>
    <variation>T</variation>
    <location>
        <position position="2237"/>
    </location>
</feature>
<feature type="sequence conflict" description="In Ref. 2; BAE37691." evidence="5" ref="2">
    <original>S</original>
    <variation>L</variation>
    <location>
        <position position="2352"/>
    </location>
</feature>
<feature type="strand" evidence="6">
    <location>
        <begin position="2489"/>
        <end position="2492"/>
    </location>
</feature>
<feature type="strand" evidence="6">
    <location>
        <begin position="2495"/>
        <end position="2498"/>
    </location>
</feature>
<feature type="strand" evidence="6">
    <location>
        <begin position="2505"/>
        <end position="2514"/>
    </location>
</feature>
<feature type="strand" evidence="6">
    <location>
        <begin position="2517"/>
        <end position="2520"/>
    </location>
</feature>
<feature type="strand" evidence="6">
    <location>
        <begin position="2524"/>
        <end position="2527"/>
    </location>
</feature>
<feature type="strand" evidence="6">
    <location>
        <begin position="2538"/>
        <end position="2547"/>
    </location>
</feature>
<feature type="turn" evidence="6">
    <location>
        <begin position="2548"/>
        <end position="2550"/>
    </location>
</feature>
<feature type="strand" evidence="6">
    <location>
        <begin position="2551"/>
        <end position="2560"/>
    </location>
</feature>
<feature type="helix" evidence="6">
    <location>
        <begin position="2562"/>
        <end position="2564"/>
    </location>
</feature>
<feature type="strand" evidence="6">
    <location>
        <begin position="2565"/>
        <end position="2567"/>
    </location>
</feature>
<feature type="strand" evidence="6">
    <location>
        <begin position="2577"/>
        <end position="2588"/>
    </location>
</feature>
<feature type="helix" evidence="6">
    <location>
        <begin position="2589"/>
        <end position="2591"/>
    </location>
</feature>
<feature type="strand" evidence="6">
    <location>
        <begin position="2592"/>
        <end position="2599"/>
    </location>
</feature>
<feature type="helix" evidence="6">
    <location>
        <begin position="2601"/>
        <end position="2607"/>
    </location>
</feature>
<feature type="strand" evidence="6">
    <location>
        <begin position="2616"/>
        <end position="2626"/>
    </location>
</feature>
<feature type="turn" evidence="6">
    <location>
        <begin position="2628"/>
        <end position="2630"/>
    </location>
</feature>
<feature type="strand" evidence="6">
    <location>
        <begin position="2633"/>
        <end position="2635"/>
    </location>
</feature>
<sequence length="2643" mass="282520">MDGRDFAPPPHLLSERGSLGHRSAAAAARLAPAGPAAQPAAHFQPGKYFPSPLPMASHTASSRLMGNPPASSFMGSFLTSSLGSAASAHPSGPTSSPSEPAYRGSHPATSQIWFSHSHEAPAYPRFSGSLASTFLPVSHLDHHGNSNVLYGQHRFYGTQKDNFYLRNLPPQPTILPANHNFPGVPRATPAHPIGSCSRDRIEAASLQKGPKEFDRFLMGKEVGKEKVSKGAEGRERPAVEEDSGKDRQKLVPPMPAEGPCKEAGPAPRGSCEGRPKHLTSCLLNTKVLNGDMGKASLASCAGGMLGRPGTGVAAPGRCAKEVAGPVEPGPAFSECLERRQMLHHAVSYTVPSGLPTGPPPPLSTGPAGSFPCLQLHAGPDGLCPLQDKVSRDLKASGPTFVPSVGHLADKSRSFQVAEACAVAGDGKDRHLDAAMATDHGAPYGVSYAHLKAEGKGERRPGGFEAALHPRLKGLEYLSSGPEAPFPGLPKGGLDKSGYFELPTSQDCARSNHQDPLGGKATQACCTLDKVANKEAPAGPPVGQKVARIRHQQHLVAPEVESGGSGAETKRKSVELASLGYSGHHMPPWGVQTGHDTSMAIIEERKGSAYLDPFGSGLQQAALLSQELPTPPDEVSAMKNLLKYSNQALVVGQKAPFVGLGSLKASCVQQEAKFPATKGPGPVERPDCARSREHEAPHGDGEVRQPPVGIAVALARQKDTVGRPDTAYNTNSGRQGRAAPTFKGAGGPRASHALDLESEEERSRACEERLGLPGRELLLQDNKDLVEFARIHPSSSCPGDLPPHLMMQGGDPAPHPHPAHPHWLPRTRSPSLWMGGHSYGLGHPALHQNLPPGFPASVPGSMPSVFPLPQDAATQLVILPSEPTPHTTPHTLAEVMDQASLWPPMYGARGPASHMQHPGQLPVYSRSQLLRQQELYALQQQQQQQQQQQQQQQQQQQQQQQQQQQQQQQHRATQALELQRVAQFQRKPEDRHMELEEAAQEKTPKSTHKPVALTPMAKGTPSSATAGLVKLSPCCQSPTLKTPASCPTPPPRPSAPCTLPICPTGSPGPGSKVPSTMDKSEEGQRAGTNLTTLEPDLTPGLNPTAGLDLSLPSDVHSSDLQDPKTMQTTTPGTRPEPPRTFLPGEPPPCSPRNLEEPGLLSRARDATQDLANLPPPVEGGLPPGKAEDPSPLEGLQALKFGDLLEGGGTEATGQTNSTQGGMQNERTVDQGAPQPPLGATPQALEQEAGSPAALDKREGPQKVPDVAQLQEEETQLEESGGDSEVDWGTPNHSHPPKALPGLDALVAATVDLGDLPDISLTDPQTPAASVPLSTAPLPHSSGIHGIALLSELADLETQRQKSELSMQEDEDVLAFNLQHLATLATAWSLVEAANLDSPVTSLQAPAADPDRGPRLTPRMQILQRKDTWAPKTKPVCPLKAAIDRLDTQEVEMRMQLAELQRRYKEKQRELARLQRRHDHEREESSRSPARRGPGRPRKRKHSSSLPALRPGGQLARSDSKKAKAVRASLSLLCAELRGDEPPRKRSKLGKSPYTGLQSVSSEKVRCKKSCGQAELPSSVAHKVAQLKPKVKSKGLPAGLGAFQRKEAAPGGRIQKKLSRAKSVTASGAARHPHPDGDSGREMHKFQAQPAVAVAHEAGSGYDSEDCQALLGTEAAPREPGLVLHPGSGVAVLGPSPSSVVKMEANQKAKKKKERQGLLGACRLSSPEGEVKIKRRTVKTKVGAKLERAPGRRPPGAPGKKKAKGKVKTGLRTEPGTATSRDTLFSPTRTFACREEGSKLASERLKRATRKSAMLQPVLRRKNGALSIALSARNAKAILGKSRKLTKVKREAVSKQGQGRAVSRLLESFAVEDDFEFDEDDTSFSDEEEEEEEAGVQLSAEQSAALARSCTIHKEDLQDGLPVLIPKEDSLLYAGSVRTLQPPDIYSIVIEGERGNRQRIYSLEQLLQEAVLDVQPQSSRYLPPGTRVCAYWSQKSRCLYPGNVVRGASSDEEDLDSVLVEFDDGDTGHIAVSNIRLLPPDFKIQCTEPSPALLVSSSCRRTKKAANEGHPPSEAPTPSLSPKVPDGPETSKTPGKKSGSKDKAGKVDLLTSGAKSPTGASDHFLGRRGSPLLSWSAVAQTKRKAVAAAAAAAGGKGPGVLQNLFQLNGSTKKLRARDTLFPMHSMATPVFGNSFRADSFSSLASSYTPFLGGAGAGLPGGAHKLLRAKKAERAEAEKAGRRRAGGEFLVKLDHEGVTSPKNKNCKALLMSDKDFGPKLGRPLSNPSYAHPALIGKDKKGRAPVHPLPMGLALRKYPLPCDSDCPSSYSDEDEDGPGLATGVPSRFLTRLSMSSSSSGSSTSSSSGSVSTSSLCSSDNEDSSYSSDDEDPALLLQTCLTRPVPALLAPPEALRSKGSSPHAHTHAQRCFLSRAGVAGAGAGASPSGSKSKFKRKEALSFSKAKELSRRQRLPSVENRPKISAFLPARQLWKWSGNPTQRRGMKGKARKLFYKAIVRGKETLRIGDCAVFLSAGRPNLPYIGRIESLWESWGSNMVVKVKWFYHPEETKLGKRQSDGKNALYQSCHEDENDVQTISHKCQVVGREQYEQMMRGRKYQDQQDLYYLAGTYDPTTGRLVTADGVPVLC</sequence>
<comment type="sequence caution" evidence="5">
    <conflict type="erroneous initiation">
        <sequence resource="EMBL-CDS" id="AAH60615"/>
    </conflict>
</comment>
<comment type="sequence caution" evidence="5">
    <conflict type="erroneous initiation">
        <sequence resource="EMBL-CDS" id="AAH72602"/>
    </conflict>
</comment>
<comment type="sequence caution" evidence="5">
    <conflict type="erroneous initiation">
        <sequence resource="EMBL-CDS" id="BAE27888"/>
    </conflict>
    <text>Truncated N-terminus.</text>
</comment>
<comment type="sequence caution" evidence="5">
    <conflict type="frameshift">
        <sequence resource="EMBL-CDS" id="BAE27888"/>
    </conflict>
</comment>
<comment type="sequence caution" evidence="5">
    <conflict type="erroneous initiation">
        <sequence resource="EMBL-CDS" id="BAE37691"/>
    </conflict>
</comment>
<organism>
    <name type="scientific">Mus musculus</name>
    <name type="common">Mouse</name>
    <dbReference type="NCBI Taxonomy" id="10090"/>
    <lineage>
        <taxon>Eukaryota</taxon>
        <taxon>Metazoa</taxon>
        <taxon>Chordata</taxon>
        <taxon>Craniata</taxon>
        <taxon>Vertebrata</taxon>
        <taxon>Euteleostomi</taxon>
        <taxon>Mammalia</taxon>
        <taxon>Eutheria</taxon>
        <taxon>Euarchontoglires</taxon>
        <taxon>Glires</taxon>
        <taxon>Rodentia</taxon>
        <taxon>Myomorpha</taxon>
        <taxon>Muroidea</taxon>
        <taxon>Muridae</taxon>
        <taxon>Murinae</taxon>
        <taxon>Mus</taxon>
        <taxon>Mus</taxon>
    </lineage>
</organism>
<reference key="1">
    <citation type="journal article" date="2006" name="FASEB J.">
        <title>A gene-targeting approach for functional characterization of KIAA genes encoding extremely large proteins.</title>
        <authorList>
            <person name="Nakayama M."/>
            <person name="Iida M."/>
            <person name="Koseki H."/>
            <person name="Ohara O."/>
        </authorList>
    </citation>
    <scope>NUCLEOTIDE SEQUENCE [MRNA]</scope>
    <scope>NUCLEOTIDE SEQUENCE [GENOMIC DNA] OF 121-1521</scope>
    <source>
        <strain>BALB/cCrSlc</strain>
        <tissue>Brain</tissue>
    </source>
</reference>
<reference key="2">
    <citation type="journal article" date="2005" name="Science">
        <title>The transcriptional landscape of the mammalian genome.</title>
        <authorList>
            <person name="Carninci P."/>
            <person name="Kasukawa T."/>
            <person name="Katayama S."/>
            <person name="Gough J."/>
            <person name="Frith M.C."/>
            <person name="Maeda N."/>
            <person name="Oyama R."/>
            <person name="Ravasi T."/>
            <person name="Lenhard B."/>
            <person name="Wells C."/>
            <person name="Kodzius R."/>
            <person name="Shimokawa K."/>
            <person name="Bajic V.B."/>
            <person name="Brenner S.E."/>
            <person name="Batalov S."/>
            <person name="Forrest A.R."/>
            <person name="Zavolan M."/>
            <person name="Davis M.J."/>
            <person name="Wilming L.G."/>
            <person name="Aidinis V."/>
            <person name="Allen J.E."/>
            <person name="Ambesi-Impiombato A."/>
            <person name="Apweiler R."/>
            <person name="Aturaliya R.N."/>
            <person name="Bailey T.L."/>
            <person name="Bansal M."/>
            <person name="Baxter L."/>
            <person name="Beisel K.W."/>
            <person name="Bersano T."/>
            <person name="Bono H."/>
            <person name="Chalk A.M."/>
            <person name="Chiu K.P."/>
            <person name="Choudhary V."/>
            <person name="Christoffels A."/>
            <person name="Clutterbuck D.R."/>
            <person name="Crowe M.L."/>
            <person name="Dalla E."/>
            <person name="Dalrymple B.P."/>
            <person name="de Bono B."/>
            <person name="Della Gatta G."/>
            <person name="di Bernardo D."/>
            <person name="Down T."/>
            <person name="Engstrom P."/>
            <person name="Fagiolini M."/>
            <person name="Faulkner G."/>
            <person name="Fletcher C.F."/>
            <person name="Fukushima T."/>
            <person name="Furuno M."/>
            <person name="Futaki S."/>
            <person name="Gariboldi M."/>
            <person name="Georgii-Hemming P."/>
            <person name="Gingeras T.R."/>
            <person name="Gojobori T."/>
            <person name="Green R.E."/>
            <person name="Gustincich S."/>
            <person name="Harbers M."/>
            <person name="Hayashi Y."/>
            <person name="Hensch T.K."/>
            <person name="Hirokawa N."/>
            <person name="Hill D."/>
            <person name="Huminiecki L."/>
            <person name="Iacono M."/>
            <person name="Ikeo K."/>
            <person name="Iwama A."/>
            <person name="Ishikawa T."/>
            <person name="Jakt M."/>
            <person name="Kanapin A."/>
            <person name="Katoh M."/>
            <person name="Kawasawa Y."/>
            <person name="Kelso J."/>
            <person name="Kitamura H."/>
            <person name="Kitano H."/>
            <person name="Kollias G."/>
            <person name="Krishnan S.P."/>
            <person name="Kruger A."/>
            <person name="Kummerfeld S.K."/>
            <person name="Kurochkin I.V."/>
            <person name="Lareau L.F."/>
            <person name="Lazarevic D."/>
            <person name="Lipovich L."/>
            <person name="Liu J."/>
            <person name="Liuni S."/>
            <person name="McWilliam S."/>
            <person name="Madan Babu M."/>
            <person name="Madera M."/>
            <person name="Marchionni L."/>
            <person name="Matsuda H."/>
            <person name="Matsuzawa S."/>
            <person name="Miki H."/>
            <person name="Mignone F."/>
            <person name="Miyake S."/>
            <person name="Morris K."/>
            <person name="Mottagui-Tabar S."/>
            <person name="Mulder N."/>
            <person name="Nakano N."/>
            <person name="Nakauchi H."/>
            <person name="Ng P."/>
            <person name="Nilsson R."/>
            <person name="Nishiguchi S."/>
            <person name="Nishikawa S."/>
            <person name="Nori F."/>
            <person name="Ohara O."/>
            <person name="Okazaki Y."/>
            <person name="Orlando V."/>
            <person name="Pang K.C."/>
            <person name="Pavan W.J."/>
            <person name="Pavesi G."/>
            <person name="Pesole G."/>
            <person name="Petrovsky N."/>
            <person name="Piazza S."/>
            <person name="Reed J."/>
            <person name="Reid J.F."/>
            <person name="Ring B.Z."/>
            <person name="Ringwald M."/>
            <person name="Rost B."/>
            <person name="Ruan Y."/>
            <person name="Salzberg S.L."/>
            <person name="Sandelin A."/>
            <person name="Schneider C."/>
            <person name="Schoenbach C."/>
            <person name="Sekiguchi K."/>
            <person name="Semple C.A."/>
            <person name="Seno S."/>
            <person name="Sessa L."/>
            <person name="Sheng Y."/>
            <person name="Shibata Y."/>
            <person name="Shimada H."/>
            <person name="Shimada K."/>
            <person name="Silva D."/>
            <person name="Sinclair B."/>
            <person name="Sperling S."/>
            <person name="Stupka E."/>
            <person name="Sugiura K."/>
            <person name="Sultana R."/>
            <person name="Takenaka Y."/>
            <person name="Taki K."/>
            <person name="Tammoja K."/>
            <person name="Tan S.L."/>
            <person name="Tang S."/>
            <person name="Taylor M.S."/>
            <person name="Tegner J."/>
            <person name="Teichmann S.A."/>
            <person name="Ueda H.R."/>
            <person name="van Nimwegen E."/>
            <person name="Verardo R."/>
            <person name="Wei C.L."/>
            <person name="Yagi K."/>
            <person name="Yamanishi H."/>
            <person name="Zabarovsky E."/>
            <person name="Zhu S."/>
            <person name="Zimmer A."/>
            <person name="Hide W."/>
            <person name="Bult C."/>
            <person name="Grimmond S.M."/>
            <person name="Teasdale R.D."/>
            <person name="Liu E.T."/>
            <person name="Brusic V."/>
            <person name="Quackenbush J."/>
            <person name="Wahlestedt C."/>
            <person name="Mattick J.S."/>
            <person name="Hume D.A."/>
            <person name="Kai C."/>
            <person name="Sasaki D."/>
            <person name="Tomaru Y."/>
            <person name="Fukuda S."/>
            <person name="Kanamori-Katayama M."/>
            <person name="Suzuki M."/>
            <person name="Aoki J."/>
            <person name="Arakawa T."/>
            <person name="Iida J."/>
            <person name="Imamura K."/>
            <person name="Itoh M."/>
            <person name="Kato T."/>
            <person name="Kawaji H."/>
            <person name="Kawagashira N."/>
            <person name="Kawashima T."/>
            <person name="Kojima M."/>
            <person name="Kondo S."/>
            <person name="Konno H."/>
            <person name="Nakano K."/>
            <person name="Ninomiya N."/>
            <person name="Nishio T."/>
            <person name="Okada M."/>
            <person name="Plessy C."/>
            <person name="Shibata K."/>
            <person name="Shiraki T."/>
            <person name="Suzuki S."/>
            <person name="Tagami M."/>
            <person name="Waki K."/>
            <person name="Watahiki A."/>
            <person name="Okamura-Oho Y."/>
            <person name="Suzuki H."/>
            <person name="Kawai J."/>
            <person name="Hayashizaki Y."/>
        </authorList>
    </citation>
    <scope>NUCLEOTIDE SEQUENCE [LARGE SCALE MRNA]</scope>
    <source>
        <strain>C57BL/6J</strain>
        <tissue>Brain</tissue>
        <tissue>Embryo</tissue>
    </source>
</reference>
<reference key="3">
    <citation type="journal article" date="2009" name="PLoS Biol.">
        <title>Lineage-specific biology revealed by a finished genome assembly of the mouse.</title>
        <authorList>
            <person name="Church D.M."/>
            <person name="Goodstadt L."/>
            <person name="Hillier L.W."/>
            <person name="Zody M.C."/>
            <person name="Goldstein S."/>
            <person name="She X."/>
            <person name="Bult C.J."/>
            <person name="Agarwala R."/>
            <person name="Cherry J.L."/>
            <person name="DiCuccio M."/>
            <person name="Hlavina W."/>
            <person name="Kapustin Y."/>
            <person name="Meric P."/>
            <person name="Maglott D."/>
            <person name="Birtle Z."/>
            <person name="Marques A.C."/>
            <person name="Graves T."/>
            <person name="Zhou S."/>
            <person name="Teague B."/>
            <person name="Potamousis K."/>
            <person name="Churas C."/>
            <person name="Place M."/>
            <person name="Herschleb J."/>
            <person name="Runnheim R."/>
            <person name="Forrest D."/>
            <person name="Amos-Landgraf J."/>
            <person name="Schwartz D.C."/>
            <person name="Cheng Z."/>
            <person name="Lindblad-Toh K."/>
            <person name="Eichler E.E."/>
            <person name="Ponting C.P."/>
        </authorList>
    </citation>
    <scope>NUCLEOTIDE SEQUENCE [LARGE SCALE GENOMIC DNA]</scope>
    <source>
        <strain>C57BL/6J</strain>
    </source>
</reference>
<reference key="4">
    <citation type="journal article" date="2004" name="Genome Res.">
        <title>The status, quality, and expansion of the NIH full-length cDNA project: the Mammalian Gene Collection (MGC).</title>
        <authorList>
            <consortium name="The MGC Project Team"/>
        </authorList>
    </citation>
    <scope>NUCLEOTIDE SEQUENCE [LARGE SCALE MRNA] OF 1395-2643</scope>
    <source>
        <strain>C57BL/6J</strain>
        <tissue>Fetal brain</tissue>
        <tissue>Mammary tumor</tissue>
    </source>
</reference>
<protein>
    <recommendedName>
        <fullName>BAH and coiled-coil domain-containing protein 1</fullName>
    </recommendedName>
</protein>
<dbReference type="EMBL" id="AB257855">
    <property type="protein sequence ID" value="BAF03198.1"/>
    <property type="molecule type" value="mRNA"/>
</dbReference>
<dbReference type="EMBL" id="AB257860">
    <property type="protein sequence ID" value="BAF03203.1"/>
    <property type="molecule type" value="Genomic_DNA"/>
</dbReference>
<dbReference type="EMBL" id="AK147250">
    <property type="protein sequence ID" value="BAE27797.1"/>
    <property type="molecule type" value="mRNA"/>
</dbReference>
<dbReference type="EMBL" id="AK147400">
    <property type="protein sequence ID" value="BAE27888.1"/>
    <property type="status" value="ALT_SEQ"/>
    <property type="molecule type" value="mRNA"/>
</dbReference>
<dbReference type="EMBL" id="AK164229">
    <property type="protein sequence ID" value="BAE37691.1"/>
    <property type="status" value="ALT_INIT"/>
    <property type="molecule type" value="mRNA"/>
</dbReference>
<dbReference type="EMBL" id="AL928567">
    <property type="status" value="NOT_ANNOTATED_CDS"/>
    <property type="molecule type" value="Genomic_DNA"/>
</dbReference>
<dbReference type="EMBL" id="BC044873">
    <property type="protein sequence ID" value="AAH44873.1"/>
    <property type="molecule type" value="mRNA"/>
</dbReference>
<dbReference type="EMBL" id="BC057623">
    <property type="protein sequence ID" value="AAH57623.1"/>
    <property type="molecule type" value="mRNA"/>
</dbReference>
<dbReference type="EMBL" id="BC060615">
    <property type="protein sequence ID" value="AAH60615.1"/>
    <property type="status" value="ALT_INIT"/>
    <property type="molecule type" value="mRNA"/>
</dbReference>
<dbReference type="EMBL" id="BC072602">
    <property type="protein sequence ID" value="AAH72602.1"/>
    <property type="status" value="ALT_INIT"/>
    <property type="molecule type" value="mRNA"/>
</dbReference>
<dbReference type="CCDS" id="CCDS83943.1"/>
<dbReference type="RefSeq" id="NP_001334550.1">
    <property type="nucleotide sequence ID" value="NM_001347621.2"/>
</dbReference>
<dbReference type="RefSeq" id="NP_940815.3">
    <property type="nucleotide sequence ID" value="NM_198423.3"/>
</dbReference>
<dbReference type="RefSeq" id="XP_011247356.1">
    <property type="nucleotide sequence ID" value="XM_011249054.4"/>
</dbReference>
<dbReference type="PDB" id="6VIL">
    <property type="method" value="X-ray"/>
    <property type="resolution" value="3.30 A"/>
    <property type="chains" value="A/B/C/D/E/F/G/H=2485-2643"/>
</dbReference>
<dbReference type="PDBsum" id="6VIL"/>
<dbReference type="SMR" id="Q3UHR0"/>
<dbReference type="FunCoup" id="Q3UHR0">
    <property type="interactions" value="746"/>
</dbReference>
<dbReference type="STRING" id="10090.ENSMUSP00000043643"/>
<dbReference type="GlyGen" id="Q3UHR0">
    <property type="glycosylation" value="6 sites, 1 O-linked glycan (1 site)"/>
</dbReference>
<dbReference type="iPTMnet" id="Q3UHR0"/>
<dbReference type="PhosphoSitePlus" id="Q3UHR0"/>
<dbReference type="jPOST" id="Q3UHR0"/>
<dbReference type="PaxDb" id="10090-ENSMUSP00000043643"/>
<dbReference type="ProteomicsDB" id="277176"/>
<dbReference type="Antibodypedia" id="75308">
    <property type="antibodies" value="11 antibodies from 6 providers"/>
</dbReference>
<dbReference type="Ensembl" id="ENSMUST00000118987.2">
    <property type="protein sequence ID" value="ENSMUSP00000112784.2"/>
    <property type="gene ID" value="ENSMUSG00000039741.17"/>
</dbReference>
<dbReference type="Ensembl" id="ENSMUST00000122148.8">
    <property type="protein sequence ID" value="ENSMUSP00000112827.2"/>
    <property type="gene ID" value="ENSMUSG00000039741.17"/>
</dbReference>
<dbReference type="GeneID" id="268515"/>
<dbReference type="KEGG" id="mmu:268515"/>
<dbReference type="UCSC" id="uc007msd.2">
    <property type="organism name" value="mouse"/>
</dbReference>
<dbReference type="AGR" id="MGI:2679272"/>
<dbReference type="CTD" id="57597"/>
<dbReference type="MGI" id="MGI:2679272">
    <property type="gene designation" value="Bahcc1"/>
</dbReference>
<dbReference type="VEuPathDB" id="HostDB:ENSMUSG00000039741"/>
<dbReference type="eggNOG" id="KOG1886">
    <property type="taxonomic scope" value="Eukaryota"/>
</dbReference>
<dbReference type="GeneTree" id="ENSGT00940000160116"/>
<dbReference type="HOGENOM" id="CLU_000573_0_0_1"/>
<dbReference type="InParanoid" id="Q3UHR0"/>
<dbReference type="OrthoDB" id="6426227at2759"/>
<dbReference type="PhylomeDB" id="Q3UHR0"/>
<dbReference type="TreeFam" id="TF336007"/>
<dbReference type="BioGRID-ORCS" id="268515">
    <property type="hits" value="0 hits in 62 CRISPR screens"/>
</dbReference>
<dbReference type="ChiTaRS" id="Bahcc1">
    <property type="organism name" value="mouse"/>
</dbReference>
<dbReference type="PRO" id="PR:Q3UHR0"/>
<dbReference type="Proteomes" id="UP000000589">
    <property type="component" value="Chromosome 11"/>
</dbReference>
<dbReference type="RNAct" id="Q3UHR0">
    <property type="molecule type" value="protein"/>
</dbReference>
<dbReference type="Bgee" id="ENSMUSG00000039741">
    <property type="expression patterns" value="Expressed in manus and 158 other cell types or tissues"/>
</dbReference>
<dbReference type="ExpressionAtlas" id="Q3UHR0">
    <property type="expression patterns" value="baseline and differential"/>
</dbReference>
<dbReference type="GO" id="GO:0003682">
    <property type="term" value="F:chromatin binding"/>
    <property type="evidence" value="ECO:0007669"/>
    <property type="project" value="InterPro"/>
</dbReference>
<dbReference type="GO" id="GO:0006325">
    <property type="term" value="P:chromatin organization"/>
    <property type="evidence" value="ECO:0000315"/>
    <property type="project" value="MGI"/>
</dbReference>
<dbReference type="GO" id="GO:0007626">
    <property type="term" value="P:locomotory behavior"/>
    <property type="evidence" value="ECO:0000315"/>
    <property type="project" value="MGI"/>
</dbReference>
<dbReference type="GO" id="GO:0030182">
    <property type="term" value="P:neuron differentiation"/>
    <property type="evidence" value="ECO:0000315"/>
    <property type="project" value="MGI"/>
</dbReference>
<dbReference type="CDD" id="cd04714">
    <property type="entry name" value="BAH_BAHCC1"/>
    <property type="match status" value="1"/>
</dbReference>
<dbReference type="CDD" id="cd20470">
    <property type="entry name" value="Tudor_BAHCC1"/>
    <property type="match status" value="1"/>
</dbReference>
<dbReference type="Gene3D" id="2.30.30.140">
    <property type="match status" value="1"/>
</dbReference>
<dbReference type="Gene3D" id="2.30.30.490">
    <property type="match status" value="1"/>
</dbReference>
<dbReference type="InterPro" id="IPR001025">
    <property type="entry name" value="BAH_dom"/>
</dbReference>
<dbReference type="InterPro" id="IPR052429">
    <property type="entry name" value="BAH_domain_protein"/>
</dbReference>
<dbReference type="InterPro" id="IPR043151">
    <property type="entry name" value="BAH_sf"/>
</dbReference>
<dbReference type="InterPro" id="IPR048924">
    <property type="entry name" value="BAHCC1-like_Tudor"/>
</dbReference>
<dbReference type="InterPro" id="IPR056841">
    <property type="entry name" value="TNRC18_BAHCC1-like_SH3"/>
</dbReference>
<dbReference type="InterPro" id="IPR047411">
    <property type="entry name" value="Tudor_BAHCC1"/>
</dbReference>
<dbReference type="PANTHER" id="PTHR12505:SF22">
    <property type="entry name" value="BAH AND COILED-COIL DOMAIN-CONTAINING PROTEIN 1"/>
    <property type="match status" value="1"/>
</dbReference>
<dbReference type="PANTHER" id="PTHR12505">
    <property type="entry name" value="PHD FINGER TRANSCRIPTION FACTOR"/>
    <property type="match status" value="1"/>
</dbReference>
<dbReference type="Pfam" id="PF01426">
    <property type="entry name" value="BAH"/>
    <property type="match status" value="1"/>
</dbReference>
<dbReference type="Pfam" id="PF21744">
    <property type="entry name" value="BAHCC1-like_Tudor"/>
    <property type="match status" value="1"/>
</dbReference>
<dbReference type="Pfam" id="PF24912">
    <property type="entry name" value="SH3_TNRC18"/>
    <property type="match status" value="1"/>
</dbReference>
<dbReference type="SMART" id="SM00439">
    <property type="entry name" value="BAH"/>
    <property type="match status" value="1"/>
</dbReference>
<dbReference type="PROSITE" id="PS51038">
    <property type="entry name" value="BAH"/>
    <property type="match status" value="1"/>
</dbReference>
<proteinExistence type="evidence at protein level"/>
<gene>
    <name type="primary">Bahcc1</name>
    <name type="synonym">Kiaa1447</name>
</gene>
<name>BAHC1_MOUSE</name>
<keyword id="KW-0002">3D-structure</keyword>
<keyword id="KW-0007">Acetylation</keyword>
<keyword id="KW-0175">Coiled coil</keyword>
<keyword id="KW-1185">Reference proteome</keyword>